<keyword id="KW-0004">4Fe-4S</keyword>
<keyword id="KW-0963">Cytoplasm</keyword>
<keyword id="KW-0408">Iron</keyword>
<keyword id="KW-0411">Iron-sulfur</keyword>
<keyword id="KW-0479">Metal-binding</keyword>
<keyword id="KW-1185">Reference proteome</keyword>
<keyword id="KW-0949">S-adenosyl-L-methionine</keyword>
<keyword id="KW-0808">Transferase</keyword>
<keyword id="KW-0819">tRNA processing</keyword>
<name>MIAB_SYMTH</name>
<evidence type="ECO:0000255" key="1">
    <source>
        <dbReference type="HAMAP-Rule" id="MF_01864"/>
    </source>
</evidence>
<evidence type="ECO:0000255" key="2">
    <source>
        <dbReference type="PROSITE-ProRule" id="PRU01266"/>
    </source>
</evidence>
<feature type="chain" id="PRO_0000374591" description="tRNA-2-methylthio-N(6)-dimethylallyladenosine synthase">
    <location>
        <begin position="1"/>
        <end position="470"/>
    </location>
</feature>
<feature type="domain" description="MTTase N-terminal" evidence="1">
    <location>
        <begin position="20"/>
        <end position="138"/>
    </location>
</feature>
<feature type="domain" description="Radical SAM core" evidence="2">
    <location>
        <begin position="162"/>
        <end position="398"/>
    </location>
</feature>
<feature type="domain" description="TRAM" evidence="1">
    <location>
        <begin position="401"/>
        <end position="464"/>
    </location>
</feature>
<feature type="binding site" evidence="1">
    <location>
        <position position="29"/>
    </location>
    <ligand>
        <name>[4Fe-4S] cluster</name>
        <dbReference type="ChEBI" id="CHEBI:49883"/>
        <label>1</label>
    </ligand>
</feature>
<feature type="binding site" evidence="1">
    <location>
        <position position="65"/>
    </location>
    <ligand>
        <name>[4Fe-4S] cluster</name>
        <dbReference type="ChEBI" id="CHEBI:49883"/>
        <label>1</label>
    </ligand>
</feature>
<feature type="binding site" evidence="1">
    <location>
        <position position="99"/>
    </location>
    <ligand>
        <name>[4Fe-4S] cluster</name>
        <dbReference type="ChEBI" id="CHEBI:49883"/>
        <label>1</label>
    </ligand>
</feature>
<feature type="binding site" evidence="1">
    <location>
        <position position="176"/>
    </location>
    <ligand>
        <name>[4Fe-4S] cluster</name>
        <dbReference type="ChEBI" id="CHEBI:49883"/>
        <label>2</label>
        <note>4Fe-4S-S-AdoMet</note>
    </ligand>
</feature>
<feature type="binding site" evidence="1">
    <location>
        <position position="180"/>
    </location>
    <ligand>
        <name>[4Fe-4S] cluster</name>
        <dbReference type="ChEBI" id="CHEBI:49883"/>
        <label>2</label>
        <note>4Fe-4S-S-AdoMet</note>
    </ligand>
</feature>
<feature type="binding site" evidence="1">
    <location>
        <position position="183"/>
    </location>
    <ligand>
        <name>[4Fe-4S] cluster</name>
        <dbReference type="ChEBI" id="CHEBI:49883"/>
        <label>2</label>
        <note>4Fe-4S-S-AdoMet</note>
    </ligand>
</feature>
<proteinExistence type="inferred from homology"/>
<dbReference type="EC" id="2.8.4.3" evidence="1"/>
<dbReference type="EMBL" id="AP006840">
    <property type="protein sequence ID" value="BAD40744.1"/>
    <property type="molecule type" value="Genomic_DNA"/>
</dbReference>
<dbReference type="SMR" id="Q67NJ9"/>
<dbReference type="STRING" id="292459.STH1759"/>
<dbReference type="KEGG" id="sth:STH1759"/>
<dbReference type="eggNOG" id="COG0621">
    <property type="taxonomic scope" value="Bacteria"/>
</dbReference>
<dbReference type="HOGENOM" id="CLU_018697_2_0_9"/>
<dbReference type="OrthoDB" id="9805215at2"/>
<dbReference type="Proteomes" id="UP000000417">
    <property type="component" value="Chromosome"/>
</dbReference>
<dbReference type="GO" id="GO:0005829">
    <property type="term" value="C:cytosol"/>
    <property type="evidence" value="ECO:0007669"/>
    <property type="project" value="TreeGrafter"/>
</dbReference>
<dbReference type="GO" id="GO:0051539">
    <property type="term" value="F:4 iron, 4 sulfur cluster binding"/>
    <property type="evidence" value="ECO:0007669"/>
    <property type="project" value="UniProtKB-UniRule"/>
</dbReference>
<dbReference type="GO" id="GO:0046872">
    <property type="term" value="F:metal ion binding"/>
    <property type="evidence" value="ECO:0007669"/>
    <property type="project" value="UniProtKB-KW"/>
</dbReference>
<dbReference type="GO" id="GO:0035597">
    <property type="term" value="F:N6-isopentenyladenosine methylthiotransferase activity"/>
    <property type="evidence" value="ECO:0007669"/>
    <property type="project" value="TreeGrafter"/>
</dbReference>
<dbReference type="CDD" id="cd01335">
    <property type="entry name" value="Radical_SAM"/>
    <property type="match status" value="1"/>
</dbReference>
<dbReference type="FunFam" id="3.40.50.12160:FF:000006">
    <property type="entry name" value="tRNA-2-methylthio-N(6)-dimethylallyladenosine synthase"/>
    <property type="match status" value="1"/>
</dbReference>
<dbReference type="FunFam" id="3.80.30.20:FF:000001">
    <property type="entry name" value="tRNA-2-methylthio-N(6)-dimethylallyladenosine synthase 2"/>
    <property type="match status" value="1"/>
</dbReference>
<dbReference type="Gene3D" id="3.40.50.12160">
    <property type="entry name" value="Methylthiotransferase, N-terminal domain"/>
    <property type="match status" value="1"/>
</dbReference>
<dbReference type="Gene3D" id="3.80.30.20">
    <property type="entry name" value="tm_1862 like domain"/>
    <property type="match status" value="1"/>
</dbReference>
<dbReference type="HAMAP" id="MF_01864">
    <property type="entry name" value="tRNA_metthiotr_MiaB"/>
    <property type="match status" value="1"/>
</dbReference>
<dbReference type="InterPro" id="IPR006638">
    <property type="entry name" value="Elp3/MiaA/NifB-like_rSAM"/>
</dbReference>
<dbReference type="InterPro" id="IPR005839">
    <property type="entry name" value="Methylthiotransferase"/>
</dbReference>
<dbReference type="InterPro" id="IPR020612">
    <property type="entry name" value="Methylthiotransferase_CS"/>
</dbReference>
<dbReference type="InterPro" id="IPR013848">
    <property type="entry name" value="Methylthiotransferase_N"/>
</dbReference>
<dbReference type="InterPro" id="IPR038135">
    <property type="entry name" value="Methylthiotransferase_N_sf"/>
</dbReference>
<dbReference type="InterPro" id="IPR006463">
    <property type="entry name" value="MiaB_methiolase"/>
</dbReference>
<dbReference type="InterPro" id="IPR007197">
    <property type="entry name" value="rSAM"/>
</dbReference>
<dbReference type="InterPro" id="IPR023404">
    <property type="entry name" value="rSAM_horseshoe"/>
</dbReference>
<dbReference type="InterPro" id="IPR002792">
    <property type="entry name" value="TRAM_dom"/>
</dbReference>
<dbReference type="NCBIfam" id="TIGR01574">
    <property type="entry name" value="miaB-methiolase"/>
    <property type="match status" value="1"/>
</dbReference>
<dbReference type="NCBIfam" id="TIGR00089">
    <property type="entry name" value="MiaB/RimO family radical SAM methylthiotransferase"/>
    <property type="match status" value="1"/>
</dbReference>
<dbReference type="PANTHER" id="PTHR43020">
    <property type="entry name" value="CDK5 REGULATORY SUBUNIT-ASSOCIATED PROTEIN 1"/>
    <property type="match status" value="1"/>
</dbReference>
<dbReference type="PANTHER" id="PTHR43020:SF2">
    <property type="entry name" value="MITOCHONDRIAL TRNA METHYLTHIOTRANSFERASE CDK5RAP1"/>
    <property type="match status" value="1"/>
</dbReference>
<dbReference type="Pfam" id="PF04055">
    <property type="entry name" value="Radical_SAM"/>
    <property type="match status" value="1"/>
</dbReference>
<dbReference type="Pfam" id="PF01938">
    <property type="entry name" value="TRAM"/>
    <property type="match status" value="1"/>
</dbReference>
<dbReference type="Pfam" id="PF00919">
    <property type="entry name" value="UPF0004"/>
    <property type="match status" value="1"/>
</dbReference>
<dbReference type="SFLD" id="SFLDF00273">
    <property type="entry name" value="(dimethylallyl)adenosine_tRNA"/>
    <property type="match status" value="1"/>
</dbReference>
<dbReference type="SFLD" id="SFLDG01082">
    <property type="entry name" value="B12-binding_domain_containing"/>
    <property type="match status" value="1"/>
</dbReference>
<dbReference type="SFLD" id="SFLDS00029">
    <property type="entry name" value="Radical_SAM"/>
    <property type="match status" value="1"/>
</dbReference>
<dbReference type="SMART" id="SM00729">
    <property type="entry name" value="Elp3"/>
    <property type="match status" value="1"/>
</dbReference>
<dbReference type="SUPFAM" id="SSF102114">
    <property type="entry name" value="Radical SAM enzymes"/>
    <property type="match status" value="1"/>
</dbReference>
<dbReference type="PROSITE" id="PS51449">
    <property type="entry name" value="MTTASE_N"/>
    <property type="match status" value="1"/>
</dbReference>
<dbReference type="PROSITE" id="PS01278">
    <property type="entry name" value="MTTASE_RADICAL"/>
    <property type="match status" value="1"/>
</dbReference>
<dbReference type="PROSITE" id="PS51918">
    <property type="entry name" value="RADICAL_SAM"/>
    <property type="match status" value="1"/>
</dbReference>
<dbReference type="PROSITE" id="PS50926">
    <property type="entry name" value="TRAM"/>
    <property type="match status" value="1"/>
</dbReference>
<sequence>MAQMQIDPEAGRRIHGKPEPRVHIETFGCQMNEHDSEIMYGILAQMGYVKAQGPDDADLLLFNTCAVRESAVEHAFGRIGQLKPLKYTNPDLIIGVCGCVPQVEGQVERIKRMFPYLDLIFGTHNIHRLPELVERARSERETVVDVWESMGDDFPDILPAAREGDLKAWVTIMYGCDKHCTYCIVPTTRGKERSRPYEVILAEVQELARQGFKEITLLGQNVNAYGKDLYGRHGEGAFDFGDLIELIDRNSPGIERIRFTTNHPKDFTRKMVEQIARAEKVCEWFHLPVQSGSDSVLRRMKRSYNRKQYLRLVGWIRELIPDAVITTDIIVGFPGETEEEFQETLSLVEEVQYDAAFMFMYSERAGTPAAQMEDRLSVPEKKERLQRLMEVQNRIARAKNEARVGKVYDILVEGLDKGKPDVVFGWTRGNILVTFPGDESLRGRIVPVRITRAGTWTLEGELVESPVTLA</sequence>
<gene>
    <name evidence="1" type="primary">miaB</name>
    <name type="ordered locus">STH1759</name>
</gene>
<accession>Q67NJ9</accession>
<protein>
    <recommendedName>
        <fullName evidence="1">tRNA-2-methylthio-N(6)-dimethylallyladenosine synthase</fullName>
        <ecNumber evidence="1">2.8.4.3</ecNumber>
    </recommendedName>
    <alternativeName>
        <fullName evidence="1">(Dimethylallyl)adenosine tRNA methylthiotransferase MiaB</fullName>
    </alternativeName>
    <alternativeName>
        <fullName evidence="1">tRNA-i(6)A37 methylthiotransferase</fullName>
    </alternativeName>
</protein>
<comment type="function">
    <text evidence="1">Catalyzes the methylthiolation of N6-(dimethylallyl)adenosine (i(6)A), leading to the formation of 2-methylthio-N6-(dimethylallyl)adenosine (ms(2)i(6)A) at position 37 in tRNAs that read codons beginning with uridine.</text>
</comment>
<comment type="catalytic activity">
    <reaction evidence="1">
        <text>N(6)-dimethylallyladenosine(37) in tRNA + (sulfur carrier)-SH + AH2 + 2 S-adenosyl-L-methionine = 2-methylsulfanyl-N(6)-dimethylallyladenosine(37) in tRNA + (sulfur carrier)-H + 5'-deoxyadenosine + L-methionine + A + S-adenosyl-L-homocysteine + 2 H(+)</text>
        <dbReference type="Rhea" id="RHEA:37067"/>
        <dbReference type="Rhea" id="RHEA-COMP:10375"/>
        <dbReference type="Rhea" id="RHEA-COMP:10376"/>
        <dbReference type="Rhea" id="RHEA-COMP:14737"/>
        <dbReference type="Rhea" id="RHEA-COMP:14739"/>
        <dbReference type="ChEBI" id="CHEBI:13193"/>
        <dbReference type="ChEBI" id="CHEBI:15378"/>
        <dbReference type="ChEBI" id="CHEBI:17319"/>
        <dbReference type="ChEBI" id="CHEBI:17499"/>
        <dbReference type="ChEBI" id="CHEBI:29917"/>
        <dbReference type="ChEBI" id="CHEBI:57844"/>
        <dbReference type="ChEBI" id="CHEBI:57856"/>
        <dbReference type="ChEBI" id="CHEBI:59789"/>
        <dbReference type="ChEBI" id="CHEBI:64428"/>
        <dbReference type="ChEBI" id="CHEBI:74415"/>
        <dbReference type="ChEBI" id="CHEBI:74417"/>
        <dbReference type="EC" id="2.8.4.3"/>
    </reaction>
</comment>
<comment type="cofactor">
    <cofactor evidence="1">
        <name>[4Fe-4S] cluster</name>
        <dbReference type="ChEBI" id="CHEBI:49883"/>
    </cofactor>
    <text evidence="1">Binds 2 [4Fe-4S] clusters. One cluster is coordinated with 3 cysteines and an exchangeable S-adenosyl-L-methionine.</text>
</comment>
<comment type="subunit">
    <text evidence="1">Monomer.</text>
</comment>
<comment type="subcellular location">
    <subcellularLocation>
        <location evidence="1">Cytoplasm</location>
    </subcellularLocation>
</comment>
<comment type="similarity">
    <text evidence="1">Belongs to the methylthiotransferase family. MiaB subfamily.</text>
</comment>
<organism>
    <name type="scientific">Symbiobacterium thermophilum (strain DSM 24528 / JCM 14929 / IAM 14863 / T)</name>
    <dbReference type="NCBI Taxonomy" id="292459"/>
    <lineage>
        <taxon>Bacteria</taxon>
        <taxon>Bacillati</taxon>
        <taxon>Bacillota</taxon>
        <taxon>Clostridia</taxon>
        <taxon>Eubacteriales</taxon>
        <taxon>Symbiobacteriaceae</taxon>
        <taxon>Symbiobacterium</taxon>
    </lineage>
</organism>
<reference key="1">
    <citation type="journal article" date="2004" name="Nucleic Acids Res.">
        <title>Genome sequence of Symbiobacterium thermophilum, an uncultivable bacterium that depends on microbial commensalism.</title>
        <authorList>
            <person name="Ueda K."/>
            <person name="Yamashita A."/>
            <person name="Ishikawa J."/>
            <person name="Shimada M."/>
            <person name="Watsuji T."/>
            <person name="Morimura K."/>
            <person name="Ikeda H."/>
            <person name="Hattori M."/>
            <person name="Beppu T."/>
        </authorList>
    </citation>
    <scope>NUCLEOTIDE SEQUENCE [LARGE SCALE GENOMIC DNA]</scope>
    <source>
        <strain>DSM 24528 / JCM 14929 / IAM 14863 / T</strain>
    </source>
</reference>